<proteinExistence type="evidence at transcript level"/>
<gene>
    <name type="primary">gtdc1</name>
    <name evidence="4" type="synonym">qtman</name>
    <name type="ORF">si:dkey-52o2.3</name>
    <name type="ORF">zgc:110568</name>
</gene>
<name>QTMAN_DANRE</name>
<reference key="1">
    <citation type="journal article" date="2013" name="Nature">
        <title>The zebrafish reference genome sequence and its relationship to the human genome.</title>
        <authorList>
            <person name="Howe K."/>
            <person name="Clark M.D."/>
            <person name="Torroja C.F."/>
            <person name="Torrance J."/>
            <person name="Berthelot C."/>
            <person name="Muffato M."/>
            <person name="Collins J.E."/>
            <person name="Humphray S."/>
            <person name="McLaren K."/>
            <person name="Matthews L."/>
            <person name="McLaren S."/>
            <person name="Sealy I."/>
            <person name="Caccamo M."/>
            <person name="Churcher C."/>
            <person name="Scott C."/>
            <person name="Barrett J.C."/>
            <person name="Koch R."/>
            <person name="Rauch G.J."/>
            <person name="White S."/>
            <person name="Chow W."/>
            <person name="Kilian B."/>
            <person name="Quintais L.T."/>
            <person name="Guerra-Assuncao J.A."/>
            <person name="Zhou Y."/>
            <person name="Gu Y."/>
            <person name="Yen J."/>
            <person name="Vogel J.H."/>
            <person name="Eyre T."/>
            <person name="Redmond S."/>
            <person name="Banerjee R."/>
            <person name="Chi J."/>
            <person name="Fu B."/>
            <person name="Langley E."/>
            <person name="Maguire S.F."/>
            <person name="Laird G.K."/>
            <person name="Lloyd D."/>
            <person name="Kenyon E."/>
            <person name="Donaldson S."/>
            <person name="Sehra H."/>
            <person name="Almeida-King J."/>
            <person name="Loveland J."/>
            <person name="Trevanion S."/>
            <person name="Jones M."/>
            <person name="Quail M."/>
            <person name="Willey D."/>
            <person name="Hunt A."/>
            <person name="Burton J."/>
            <person name="Sims S."/>
            <person name="McLay K."/>
            <person name="Plumb B."/>
            <person name="Davis J."/>
            <person name="Clee C."/>
            <person name="Oliver K."/>
            <person name="Clark R."/>
            <person name="Riddle C."/>
            <person name="Elliot D."/>
            <person name="Threadgold G."/>
            <person name="Harden G."/>
            <person name="Ware D."/>
            <person name="Begum S."/>
            <person name="Mortimore B."/>
            <person name="Kerry G."/>
            <person name="Heath P."/>
            <person name="Phillimore B."/>
            <person name="Tracey A."/>
            <person name="Corby N."/>
            <person name="Dunn M."/>
            <person name="Johnson C."/>
            <person name="Wood J."/>
            <person name="Clark S."/>
            <person name="Pelan S."/>
            <person name="Griffiths G."/>
            <person name="Smith M."/>
            <person name="Glithero R."/>
            <person name="Howden P."/>
            <person name="Barker N."/>
            <person name="Lloyd C."/>
            <person name="Stevens C."/>
            <person name="Harley J."/>
            <person name="Holt K."/>
            <person name="Panagiotidis G."/>
            <person name="Lovell J."/>
            <person name="Beasley H."/>
            <person name="Henderson C."/>
            <person name="Gordon D."/>
            <person name="Auger K."/>
            <person name="Wright D."/>
            <person name="Collins J."/>
            <person name="Raisen C."/>
            <person name="Dyer L."/>
            <person name="Leung K."/>
            <person name="Robertson L."/>
            <person name="Ambridge K."/>
            <person name="Leongamornlert D."/>
            <person name="McGuire S."/>
            <person name="Gilderthorp R."/>
            <person name="Griffiths C."/>
            <person name="Manthravadi D."/>
            <person name="Nichol S."/>
            <person name="Barker G."/>
            <person name="Whitehead S."/>
            <person name="Kay M."/>
            <person name="Brown J."/>
            <person name="Murnane C."/>
            <person name="Gray E."/>
            <person name="Humphries M."/>
            <person name="Sycamore N."/>
            <person name="Barker D."/>
            <person name="Saunders D."/>
            <person name="Wallis J."/>
            <person name="Babbage A."/>
            <person name="Hammond S."/>
            <person name="Mashreghi-Mohammadi M."/>
            <person name="Barr L."/>
            <person name="Martin S."/>
            <person name="Wray P."/>
            <person name="Ellington A."/>
            <person name="Matthews N."/>
            <person name="Ellwood M."/>
            <person name="Woodmansey R."/>
            <person name="Clark G."/>
            <person name="Cooper J."/>
            <person name="Tromans A."/>
            <person name="Grafham D."/>
            <person name="Skuce C."/>
            <person name="Pandian R."/>
            <person name="Andrews R."/>
            <person name="Harrison E."/>
            <person name="Kimberley A."/>
            <person name="Garnett J."/>
            <person name="Fosker N."/>
            <person name="Hall R."/>
            <person name="Garner P."/>
            <person name="Kelly D."/>
            <person name="Bird C."/>
            <person name="Palmer S."/>
            <person name="Gehring I."/>
            <person name="Berger A."/>
            <person name="Dooley C.M."/>
            <person name="Ersan-Urun Z."/>
            <person name="Eser C."/>
            <person name="Geiger H."/>
            <person name="Geisler M."/>
            <person name="Karotki L."/>
            <person name="Kirn A."/>
            <person name="Konantz J."/>
            <person name="Konantz M."/>
            <person name="Oberlander M."/>
            <person name="Rudolph-Geiger S."/>
            <person name="Teucke M."/>
            <person name="Lanz C."/>
            <person name="Raddatz G."/>
            <person name="Osoegawa K."/>
            <person name="Zhu B."/>
            <person name="Rapp A."/>
            <person name="Widaa S."/>
            <person name="Langford C."/>
            <person name="Yang F."/>
            <person name="Schuster S.C."/>
            <person name="Carter N.P."/>
            <person name="Harrow J."/>
            <person name="Ning Z."/>
            <person name="Herrero J."/>
            <person name="Searle S.M."/>
            <person name="Enright A."/>
            <person name="Geisler R."/>
            <person name="Plasterk R.H."/>
            <person name="Lee C."/>
            <person name="Westerfield M."/>
            <person name="de Jong P.J."/>
            <person name="Zon L.I."/>
            <person name="Postlethwait J.H."/>
            <person name="Nusslein-Volhard C."/>
            <person name="Hubbard T.J."/>
            <person name="Roest Crollius H."/>
            <person name="Rogers J."/>
            <person name="Stemple D.L."/>
        </authorList>
    </citation>
    <scope>NUCLEOTIDE SEQUENCE [LARGE SCALE GENOMIC DNA]</scope>
    <source>
        <strain>Tuebingen</strain>
    </source>
</reference>
<reference key="2">
    <citation type="submission" date="2005-04" db="EMBL/GenBank/DDBJ databases">
        <authorList>
            <consortium name="NIH - Zebrafish Gene Collection (ZGC) project"/>
        </authorList>
    </citation>
    <scope>NUCLEOTIDE SEQUENCE [LARGE SCALE MRNA]</scope>
    <source>
        <tissue>Embryo</tissue>
    </source>
</reference>
<reference key="3">
    <citation type="journal article" date="2023" name="Cell">
        <title>Glycosylated queuosines in tRNAs optimize translational rate and post-embryonic growth.</title>
        <authorList>
            <person name="Zhao X."/>
            <person name="Ma D."/>
            <person name="Ishiguro K."/>
            <person name="Saito H."/>
            <person name="Akichika S."/>
            <person name="Matsuzawa I."/>
            <person name="Mito M."/>
            <person name="Irie T."/>
            <person name="Ishibashi K."/>
            <person name="Wakabayashi K."/>
            <person name="Sakaguchi Y."/>
            <person name="Yokoyama T."/>
            <person name="Mishima Y."/>
            <person name="Shirouzu M."/>
            <person name="Iwasaki S."/>
            <person name="Suzuki T."/>
            <person name="Suzuki T."/>
        </authorList>
    </citation>
    <scope>DISRUPTION PHENOTYPE</scope>
</reference>
<protein>
    <recommendedName>
        <fullName evidence="4">tRNA-queuosine alpha-mannosyltransferase</fullName>
        <shortName evidence="4">QTMAN</shortName>
        <ecNumber evidence="1">2.4.1.110</ecNumber>
    </recommendedName>
    <alternativeName>
        <fullName evidence="5">Glycosyltransferase-like domain-containing protein 1</fullName>
    </alternativeName>
</protein>
<accession>Q568B7</accession>
<accession>B0S8J7</accession>
<evidence type="ECO:0000250" key="1">
    <source>
        <dbReference type="UniProtKB" id="Q4AE62"/>
    </source>
</evidence>
<evidence type="ECO:0000256" key="2">
    <source>
        <dbReference type="SAM" id="MobiDB-lite"/>
    </source>
</evidence>
<evidence type="ECO:0000269" key="3">
    <source>
    </source>
</evidence>
<evidence type="ECO:0000303" key="4">
    <source>
    </source>
</evidence>
<evidence type="ECO:0000305" key="5"/>
<organism>
    <name type="scientific">Danio rerio</name>
    <name type="common">Zebrafish</name>
    <name type="synonym">Brachydanio rerio</name>
    <dbReference type="NCBI Taxonomy" id="7955"/>
    <lineage>
        <taxon>Eukaryota</taxon>
        <taxon>Metazoa</taxon>
        <taxon>Chordata</taxon>
        <taxon>Craniata</taxon>
        <taxon>Vertebrata</taxon>
        <taxon>Euteleostomi</taxon>
        <taxon>Actinopterygii</taxon>
        <taxon>Neopterygii</taxon>
        <taxon>Teleostei</taxon>
        <taxon>Ostariophysi</taxon>
        <taxon>Cypriniformes</taxon>
        <taxon>Danionidae</taxon>
        <taxon>Danioninae</taxon>
        <taxon>Danio</taxon>
    </lineage>
</organism>
<sequence>MSVLLLEAFYGGSHKQLLDLLKESVEDCVSFTLPAKKWHWRARTSALYFMQAVPANSSYRVLFTSSVLNLAELVALRPDLGHLKKVLYFHENQLVYPVRKSQERDFQYGYNQILSCLVADVVVFNSSFNMESFLSSISTFMKTMPDHRPKDLERLIRPKCHVLHFPIRFPDVTRFLPAHKRLRHPVRCDDIHAPAAKSHIQTSSPSSYPDVEPPEKMLNVAGTNQSHEPTSVTPHQETASPLCGHEGEKLRPLHIVWPHRWEHDKDPQLFFQTLLKLKDRQLSFEVSVLGETFTDVPDIFSEAKEQLVDHIQHWGFMPSKEDYLKVLCQADVVVSTAKHEFFGVAMLEAVHCGCYPLCPKALVYPEIFPATYLYSTPEQLCKRLQEFCKRPQLARQHVVQVSLSSFSWDSLGDNFRSLLKADSGRMFTDKHMA</sequence>
<keyword id="KW-0963">Cytoplasm</keyword>
<keyword id="KW-0328">Glycosyltransferase</keyword>
<keyword id="KW-0539">Nucleus</keyword>
<keyword id="KW-1185">Reference proteome</keyword>
<keyword id="KW-0808">Transferase</keyword>
<feature type="chain" id="PRO_0000311092" description="tRNA-queuosine alpha-mannosyltransferase">
    <location>
        <begin position="1"/>
        <end position="433"/>
    </location>
</feature>
<feature type="region of interest" description="Disordered" evidence="2">
    <location>
        <begin position="194"/>
        <end position="244"/>
    </location>
</feature>
<feature type="compositionally biased region" description="Polar residues" evidence="2">
    <location>
        <begin position="221"/>
        <end position="239"/>
    </location>
</feature>
<feature type="sequence conflict" description="In Ref. 2; AAH92932." evidence="5" ref="2">
    <original>P</original>
    <variation>L</variation>
    <location>
        <position position="54"/>
    </location>
</feature>
<feature type="sequence conflict" description="In Ref. 2; AAH92932." evidence="5" ref="2">
    <original>M</original>
    <variation>L</variation>
    <location>
        <position position="432"/>
    </location>
</feature>
<comment type="function">
    <text evidence="1">Glycosyltransferase that specifically catalyzes mannosylation of cytoplasmic tRNA(Asp) modified with queuosine at position 34 (queuosine(34)). Mannosylates the cyclopentene moiety of queuosine(34) in tRNA(Asp) to form mannosyl-queuosine(34). Mannosylation of queuosine(34) in tRNA(Asp) is required to slow-down elongation at cognate codons, GAC and GAU, thereby regulating protein translation.</text>
</comment>
<comment type="catalytic activity">
    <reaction evidence="1">
        <text>queuosine(34) in tRNA(Asp) + GDP-alpha-D-mannose = O-4''-alpha-D-mannosylqueuosine(34) in tRNA(Asp) + GDP + H(+)</text>
        <dbReference type="Rhea" id="RHEA:12885"/>
        <dbReference type="Rhea" id="RHEA-COMP:18572"/>
        <dbReference type="Rhea" id="RHEA-COMP:18581"/>
        <dbReference type="ChEBI" id="CHEBI:15378"/>
        <dbReference type="ChEBI" id="CHEBI:57527"/>
        <dbReference type="ChEBI" id="CHEBI:58189"/>
        <dbReference type="ChEBI" id="CHEBI:194431"/>
        <dbReference type="ChEBI" id="CHEBI:194442"/>
        <dbReference type="EC" id="2.4.1.110"/>
    </reaction>
    <physiologicalReaction direction="left-to-right" evidence="1">
        <dbReference type="Rhea" id="RHEA:12886"/>
    </physiologicalReaction>
</comment>
<comment type="subcellular location">
    <subcellularLocation>
        <location evidence="1">Cytoplasm</location>
    </subcellularLocation>
    <subcellularLocation>
        <location evidence="1">Nucleus</location>
    </subcellularLocation>
</comment>
<comment type="disruption phenotype">
    <text evidence="3">Decreased postembryonic growth, characterized by shortened body length.</text>
</comment>
<comment type="similarity">
    <text evidence="5">Belongs to the glycosyltransferase group 1 family. Glycosyltransferase 4 subfamily.</text>
</comment>
<dbReference type="EC" id="2.4.1.110" evidence="1"/>
<dbReference type="EMBL" id="BX936460">
    <property type="protein sequence ID" value="CAQ15307.1"/>
    <property type="molecule type" value="Genomic_DNA"/>
</dbReference>
<dbReference type="EMBL" id="CR925716">
    <property type="protein sequence ID" value="CAQ15307.1"/>
    <property type="status" value="JOINED"/>
    <property type="molecule type" value="Genomic_DNA"/>
</dbReference>
<dbReference type="EMBL" id="CR925716">
    <property type="protein sequence ID" value="CAQ14815.1"/>
    <property type="molecule type" value="Genomic_DNA"/>
</dbReference>
<dbReference type="EMBL" id="BX936460">
    <property type="protein sequence ID" value="CAQ14815.1"/>
    <property type="status" value="JOINED"/>
    <property type="molecule type" value="Genomic_DNA"/>
</dbReference>
<dbReference type="EMBL" id="BC092932">
    <property type="protein sequence ID" value="AAH92932.1"/>
    <property type="molecule type" value="mRNA"/>
</dbReference>
<dbReference type="RefSeq" id="NP_001017560.1">
    <property type="nucleotide sequence ID" value="NM_001017560.1"/>
</dbReference>
<dbReference type="FunCoup" id="Q568B7">
    <property type="interactions" value="461"/>
</dbReference>
<dbReference type="STRING" id="7955.ENSDARP00000016818"/>
<dbReference type="CAZy" id="GT4">
    <property type="family name" value="Glycosyltransferase Family 4"/>
</dbReference>
<dbReference type="PaxDb" id="7955-ENSDARP00000016818"/>
<dbReference type="Ensembl" id="ENSDART00000024572">
    <property type="protein sequence ID" value="ENSDARP00000016818"/>
    <property type="gene ID" value="ENSDARG00000020642"/>
</dbReference>
<dbReference type="Ensembl" id="ENSDART00000127135">
    <property type="protein sequence ID" value="ENSDARP00000109130"/>
    <property type="gene ID" value="ENSDARG00000020642"/>
</dbReference>
<dbReference type="GeneID" id="550132"/>
<dbReference type="KEGG" id="dre:550132"/>
<dbReference type="AGR" id="ZFIN:ZDB-GENE-050417-8"/>
<dbReference type="CTD" id="79712"/>
<dbReference type="ZFIN" id="ZDB-GENE-050417-8">
    <property type="gene designation" value="gtdc1"/>
</dbReference>
<dbReference type="eggNOG" id="ENOG502QQJ3">
    <property type="taxonomic scope" value="Eukaryota"/>
</dbReference>
<dbReference type="HOGENOM" id="CLU_033439_1_0_1"/>
<dbReference type="InParanoid" id="Q568B7"/>
<dbReference type="OMA" id="CYPIAPN"/>
<dbReference type="OrthoDB" id="10032790at2759"/>
<dbReference type="PhylomeDB" id="Q568B7"/>
<dbReference type="TreeFam" id="TF324818"/>
<dbReference type="PRO" id="PR:Q568B7"/>
<dbReference type="Proteomes" id="UP000000437">
    <property type="component" value="Chromosome 9"/>
</dbReference>
<dbReference type="Bgee" id="ENSDARG00000020642">
    <property type="expression patterns" value="Expressed in blastula and 24 other cell types or tissues"/>
</dbReference>
<dbReference type="ExpressionAtlas" id="Q568B7">
    <property type="expression patterns" value="baseline and differential"/>
</dbReference>
<dbReference type="GO" id="GO:0005737">
    <property type="term" value="C:cytoplasm"/>
    <property type="evidence" value="ECO:0000250"/>
    <property type="project" value="UniProtKB"/>
</dbReference>
<dbReference type="GO" id="GO:0005634">
    <property type="term" value="C:nucleus"/>
    <property type="evidence" value="ECO:0000250"/>
    <property type="project" value="UniProtKB"/>
</dbReference>
<dbReference type="GO" id="GO:0016438">
    <property type="term" value="F:tRNA-queuosine(34) beta-mannosyltransferase activity"/>
    <property type="evidence" value="ECO:0000250"/>
    <property type="project" value="UniProtKB"/>
</dbReference>
<dbReference type="GO" id="GO:0007417">
    <property type="term" value="P:central nervous system development"/>
    <property type="evidence" value="ECO:0000315"/>
    <property type="project" value="ZFIN"/>
</dbReference>
<dbReference type="GO" id="GO:0006417">
    <property type="term" value="P:regulation of translation"/>
    <property type="evidence" value="ECO:0000250"/>
    <property type="project" value="UniProtKB"/>
</dbReference>
<dbReference type="GO" id="GO:0006400">
    <property type="term" value="P:tRNA modification"/>
    <property type="evidence" value="ECO:0000250"/>
    <property type="project" value="UniProtKB"/>
</dbReference>
<dbReference type="CDD" id="cd01635">
    <property type="entry name" value="Glycosyltransferase_GTB-type"/>
    <property type="match status" value="1"/>
</dbReference>
<dbReference type="Gene3D" id="3.40.50.2000">
    <property type="entry name" value="Glycogen Phosphorylase B"/>
    <property type="match status" value="1"/>
</dbReference>
<dbReference type="InterPro" id="IPR001296">
    <property type="entry name" value="Glyco_trans_1"/>
</dbReference>
<dbReference type="InterPro" id="IPR051862">
    <property type="entry name" value="GT-like_domain_containing_1"/>
</dbReference>
<dbReference type="InterPro" id="IPR022701">
    <property type="entry name" value="QTMAN_N"/>
</dbReference>
<dbReference type="PANTHER" id="PTHR13615">
    <property type="entry name" value="GLYCOSYLTRANSFERASE-LIKE 1"/>
    <property type="match status" value="1"/>
</dbReference>
<dbReference type="PANTHER" id="PTHR13615:SF3">
    <property type="entry name" value="GLYCOSYLTRANSFERASE-LIKE DOMAIN-CONTAINING PROTEIN 1"/>
    <property type="match status" value="1"/>
</dbReference>
<dbReference type="Pfam" id="PF00534">
    <property type="entry name" value="Glycos_transf_1"/>
    <property type="match status" value="1"/>
</dbReference>
<dbReference type="Pfam" id="PF12038">
    <property type="entry name" value="QTMAN_N"/>
    <property type="match status" value="1"/>
</dbReference>
<dbReference type="SUPFAM" id="SSF53756">
    <property type="entry name" value="UDP-Glycosyltransferase/glycogen phosphorylase"/>
    <property type="match status" value="1"/>
</dbReference>